<comment type="function">
    <text evidence="1">Probably participates in a plant defense mechanism.</text>
</comment>
<comment type="tissue specificity">
    <text evidence="2">Expressed in seed, root and nodule but not in flower, stem, shoot, leaf and pod (at protein level).</text>
</comment>
<comment type="domain">
    <text evidence="4">The presence of a 'disulfide through disulfide knot' structurally defines this protein as a knottin.</text>
</comment>
<comment type="PTM">
    <text evidence="2">Contains 3 disulfide bonds.</text>
</comment>
<comment type="PTM">
    <text evidence="1 2">This is a cyclic peptide.</text>
</comment>
<comment type="mass spectrometry" mass="3242.0" method="MALDI" evidence="2"/>
<comment type="similarity">
    <text evidence="1">Belongs to the cyclotide family. Bracelet subfamily.</text>
</comment>
<comment type="caution">
    <text evidence="5">This peptide is cyclic. The start position was chosen by similarity to cliotide T1 for which the DNA sequence is known.</text>
</comment>
<evidence type="ECO:0000255" key="1">
    <source>
        <dbReference type="PROSITE-ProRule" id="PRU00395"/>
    </source>
</evidence>
<evidence type="ECO:0000269" key="2">
    <source>
    </source>
</evidence>
<evidence type="ECO:0000303" key="3">
    <source>
    </source>
</evidence>
<evidence type="ECO:0000305" key="4"/>
<evidence type="ECO:0000305" key="5">
    <source>
    </source>
</evidence>
<evidence type="ECO:0007829" key="6">
    <source>
        <dbReference type="PDB" id="7S55"/>
    </source>
</evidence>
<protein>
    <recommendedName>
        <fullName evidence="3">Cliotide T10</fullName>
    </recommendedName>
</protein>
<name>CYC10_CLITE</name>
<feature type="peptide" id="PRO_0000440064" description="Cliotide T10" evidence="2">
    <location>
        <begin position="1"/>
        <end position="31"/>
    </location>
</feature>
<feature type="disulfide bond" evidence="1">
    <location>
        <begin position="4"/>
        <end position="21"/>
    </location>
</feature>
<feature type="disulfide bond" evidence="1">
    <location>
        <begin position="8"/>
        <end position="23"/>
    </location>
</feature>
<feature type="disulfide bond" evidence="1">
    <location>
        <begin position="13"/>
        <end position="28"/>
    </location>
</feature>
<feature type="cross-link" description="Cyclopeptide (Gly-Asn)" evidence="3">
    <location>
        <begin position="1"/>
        <end position="31"/>
    </location>
</feature>
<feature type="strand" evidence="6">
    <location>
        <begin position="2"/>
        <end position="7"/>
    </location>
</feature>
<feature type="strand" evidence="6">
    <location>
        <begin position="9"/>
        <end position="11"/>
    </location>
</feature>
<feature type="turn" evidence="6">
    <location>
        <begin position="15"/>
        <end position="20"/>
    </location>
</feature>
<feature type="strand" evidence="6">
    <location>
        <begin position="22"/>
        <end position="24"/>
    </location>
</feature>
<feature type="strand" evidence="6">
    <location>
        <begin position="27"/>
        <end position="30"/>
    </location>
</feature>
<organism evidence="3">
    <name type="scientific">Clitoria ternatea</name>
    <name type="common">Butterfly pea</name>
    <dbReference type="NCBI Taxonomy" id="43366"/>
    <lineage>
        <taxon>Eukaryota</taxon>
        <taxon>Viridiplantae</taxon>
        <taxon>Streptophyta</taxon>
        <taxon>Embryophyta</taxon>
        <taxon>Tracheophyta</taxon>
        <taxon>Spermatophyta</taxon>
        <taxon>Magnoliopsida</taxon>
        <taxon>eudicotyledons</taxon>
        <taxon>Gunneridae</taxon>
        <taxon>Pentapetalae</taxon>
        <taxon>rosids</taxon>
        <taxon>fabids</taxon>
        <taxon>Fabales</taxon>
        <taxon>Fabaceae</taxon>
        <taxon>Papilionoideae</taxon>
        <taxon>50 kb inversion clade</taxon>
        <taxon>NPAAA clade</taxon>
        <taxon>indigoferoid/millettioid clade</taxon>
        <taxon>Phaseoleae</taxon>
        <taxon>Clitoria</taxon>
    </lineage>
</organism>
<proteinExistence type="evidence at protein level"/>
<keyword id="KW-0002">3D-structure</keyword>
<keyword id="KW-0903">Direct protein sequencing</keyword>
<keyword id="KW-1015">Disulfide bond</keyword>
<keyword id="KW-0960">Knottin</keyword>
<keyword id="KW-0611">Plant defense</keyword>
<reference evidence="4" key="1">
    <citation type="journal article" date="2011" name="J. Biol. Chem.">
        <title>Discovery and characterization of novel cyclotides originated from chimeric precursors consisting of albumin-1 chain a and cyclotide domains in the fabaceae family.</title>
        <authorList>
            <person name="Nguyen G.K."/>
            <person name="Zhang S."/>
            <person name="Nguyen N.T."/>
            <person name="Nguyen P.Q."/>
            <person name="Chiu M.S."/>
            <person name="Hardjojo A."/>
            <person name="Tam J.P."/>
        </authorList>
    </citation>
    <scope>PROTEIN SEQUENCE</scope>
    <scope>PRESENCE OF DISULFIDE BONDS</scope>
    <scope>CYCLIZATION</scope>
    <scope>TISSUE SPECIFICITY</scope>
    <scope>MASS SPECTROMETRY</scope>
    <scope>IDENTIFICATION BY MASS SPECTROMETRY</scope>
</reference>
<accession>C0HKG2</accession>
<dbReference type="PDB" id="7S55">
    <property type="method" value="NMR"/>
    <property type="chains" value="A=1-31"/>
</dbReference>
<dbReference type="PDBsum" id="7S55"/>
<dbReference type="SMR" id="C0HKG2"/>
<dbReference type="GO" id="GO:0006952">
    <property type="term" value="P:defense response"/>
    <property type="evidence" value="ECO:0007669"/>
    <property type="project" value="UniProtKB-KW"/>
</dbReference>
<dbReference type="InterPro" id="IPR005535">
    <property type="entry name" value="Cyclotide"/>
</dbReference>
<dbReference type="InterPro" id="IPR012323">
    <property type="entry name" value="Cyclotide_bracelet_CS"/>
</dbReference>
<dbReference type="InterPro" id="IPR036146">
    <property type="entry name" value="Cyclotide_sf"/>
</dbReference>
<dbReference type="Pfam" id="PF03784">
    <property type="entry name" value="Cyclotide"/>
    <property type="match status" value="1"/>
</dbReference>
<dbReference type="PIRSF" id="PIRSF037891">
    <property type="entry name" value="Cycloviolacin"/>
    <property type="match status" value="1"/>
</dbReference>
<dbReference type="SUPFAM" id="SSF57038">
    <property type="entry name" value="Cyclotides"/>
    <property type="match status" value="1"/>
</dbReference>
<dbReference type="PROSITE" id="PS51052">
    <property type="entry name" value="CYCLOTIDE"/>
    <property type="match status" value="1"/>
</dbReference>
<dbReference type="PROSITE" id="PS60008">
    <property type="entry name" value="CYCLOTIDE_BRACELET"/>
    <property type="match status" value="1"/>
</dbReference>
<sequence length="31" mass="3269">GIPCGESCVYIPCTVTALLGCSCKDKVCYKN</sequence>